<sequence>MVRIRLTRMGKRKQPFYRIVVVDSRKRRDGAYIESLGYYNPLKEGEIKIDVERAVDWILKGAQPSDTVRDIFKKFGVMKRVHEIKYGKKEEATSE</sequence>
<feature type="chain" id="PRO_1000134331" description="Small ribosomal subunit protein bS16">
    <location>
        <begin position="1"/>
        <end position="95"/>
    </location>
</feature>
<dbReference type="EMBL" id="CP000916">
    <property type="protein sequence ID" value="ACM23325.1"/>
    <property type="molecule type" value="Genomic_DNA"/>
</dbReference>
<dbReference type="RefSeq" id="WP_015919640.1">
    <property type="nucleotide sequence ID" value="NC_011978.1"/>
</dbReference>
<dbReference type="SMR" id="B9K8P2"/>
<dbReference type="STRING" id="309803.CTN_1149"/>
<dbReference type="KEGG" id="tna:CTN_1149"/>
<dbReference type="eggNOG" id="COG0228">
    <property type="taxonomic scope" value="Bacteria"/>
</dbReference>
<dbReference type="HOGENOM" id="CLU_100590_5_0_0"/>
<dbReference type="Proteomes" id="UP000000445">
    <property type="component" value="Chromosome"/>
</dbReference>
<dbReference type="GO" id="GO:0005737">
    <property type="term" value="C:cytoplasm"/>
    <property type="evidence" value="ECO:0007669"/>
    <property type="project" value="UniProtKB-ARBA"/>
</dbReference>
<dbReference type="GO" id="GO:0015935">
    <property type="term" value="C:small ribosomal subunit"/>
    <property type="evidence" value="ECO:0007669"/>
    <property type="project" value="TreeGrafter"/>
</dbReference>
<dbReference type="GO" id="GO:0003735">
    <property type="term" value="F:structural constituent of ribosome"/>
    <property type="evidence" value="ECO:0007669"/>
    <property type="project" value="InterPro"/>
</dbReference>
<dbReference type="GO" id="GO:0006412">
    <property type="term" value="P:translation"/>
    <property type="evidence" value="ECO:0007669"/>
    <property type="project" value="UniProtKB-UniRule"/>
</dbReference>
<dbReference type="FunFam" id="3.30.1320.10:FF:000005">
    <property type="entry name" value="30S ribosomal protein S16"/>
    <property type="match status" value="1"/>
</dbReference>
<dbReference type="Gene3D" id="3.30.1320.10">
    <property type="match status" value="1"/>
</dbReference>
<dbReference type="HAMAP" id="MF_00385">
    <property type="entry name" value="Ribosomal_bS16"/>
    <property type="match status" value="1"/>
</dbReference>
<dbReference type="InterPro" id="IPR000307">
    <property type="entry name" value="Ribosomal_bS16"/>
</dbReference>
<dbReference type="InterPro" id="IPR020592">
    <property type="entry name" value="Ribosomal_bS16_CS"/>
</dbReference>
<dbReference type="InterPro" id="IPR023803">
    <property type="entry name" value="Ribosomal_bS16_dom_sf"/>
</dbReference>
<dbReference type="NCBIfam" id="TIGR00002">
    <property type="entry name" value="S16"/>
    <property type="match status" value="1"/>
</dbReference>
<dbReference type="PANTHER" id="PTHR12919">
    <property type="entry name" value="30S RIBOSOMAL PROTEIN S16"/>
    <property type="match status" value="1"/>
</dbReference>
<dbReference type="PANTHER" id="PTHR12919:SF20">
    <property type="entry name" value="SMALL RIBOSOMAL SUBUNIT PROTEIN BS16M"/>
    <property type="match status" value="1"/>
</dbReference>
<dbReference type="Pfam" id="PF00886">
    <property type="entry name" value="Ribosomal_S16"/>
    <property type="match status" value="1"/>
</dbReference>
<dbReference type="SUPFAM" id="SSF54565">
    <property type="entry name" value="Ribosomal protein S16"/>
    <property type="match status" value="1"/>
</dbReference>
<dbReference type="PROSITE" id="PS00732">
    <property type="entry name" value="RIBOSOMAL_S16"/>
    <property type="match status" value="1"/>
</dbReference>
<comment type="similarity">
    <text evidence="1">Belongs to the bacterial ribosomal protein bS16 family.</text>
</comment>
<evidence type="ECO:0000255" key="1">
    <source>
        <dbReference type="HAMAP-Rule" id="MF_00385"/>
    </source>
</evidence>
<evidence type="ECO:0000305" key="2"/>
<accession>B9K8P2</accession>
<organism>
    <name type="scientific">Thermotoga neapolitana (strain ATCC 49049 / DSM 4359 / NBRC 107923 / NS-E)</name>
    <dbReference type="NCBI Taxonomy" id="309803"/>
    <lineage>
        <taxon>Bacteria</taxon>
        <taxon>Thermotogati</taxon>
        <taxon>Thermotogota</taxon>
        <taxon>Thermotogae</taxon>
        <taxon>Thermotogales</taxon>
        <taxon>Thermotogaceae</taxon>
        <taxon>Thermotoga</taxon>
    </lineage>
</organism>
<gene>
    <name evidence="1" type="primary">rpsP</name>
    <name type="ordered locus">CTN_1149</name>
</gene>
<proteinExistence type="inferred from homology"/>
<protein>
    <recommendedName>
        <fullName evidence="1">Small ribosomal subunit protein bS16</fullName>
    </recommendedName>
    <alternativeName>
        <fullName evidence="2">30S ribosomal protein S16</fullName>
    </alternativeName>
</protein>
<reference key="1">
    <citation type="submission" date="2007-11" db="EMBL/GenBank/DDBJ databases">
        <title>The genome sequence of the hyperthermophilic bacterium Thermotoga neapolitana.</title>
        <authorList>
            <person name="Lim S.K."/>
            <person name="Kim J.S."/>
            <person name="Cha S.H."/>
            <person name="Park B.C."/>
            <person name="Lee D.S."/>
            <person name="Tae H.S."/>
            <person name="Kim S.-J."/>
            <person name="Kim J.J."/>
            <person name="Park K.J."/>
            <person name="Lee S.Y."/>
        </authorList>
    </citation>
    <scope>NUCLEOTIDE SEQUENCE [LARGE SCALE GENOMIC DNA]</scope>
    <source>
        <strain>ATCC 49049 / DSM 4359 / NBRC 107923 / NS-E</strain>
    </source>
</reference>
<name>RS16_THENN</name>
<keyword id="KW-0687">Ribonucleoprotein</keyword>
<keyword id="KW-0689">Ribosomal protein</keyword>